<dbReference type="EC" id="3.1.4.41" evidence="1"/>
<dbReference type="EMBL" id="ABSU01000022">
    <property type="protein sequence ID" value="EFE31333.1"/>
    <property type="molecule type" value="Genomic_DNA"/>
</dbReference>
<dbReference type="RefSeq" id="XP_003011973.1">
    <property type="nucleotide sequence ID" value="XM_003011927.1"/>
</dbReference>
<dbReference type="SMR" id="D4AZV8"/>
<dbReference type="GeneID" id="9519297"/>
<dbReference type="KEGG" id="abe:ARB_01728"/>
<dbReference type="eggNOG" id="ENOG502S5U7">
    <property type="taxonomic scope" value="Eukaryota"/>
</dbReference>
<dbReference type="HOGENOM" id="CLU_059400_0_0_1"/>
<dbReference type="OMA" id="FVWFDIK"/>
<dbReference type="OrthoDB" id="4907280at2759"/>
<dbReference type="Proteomes" id="UP000008866">
    <property type="component" value="Unassembled WGS sequence"/>
</dbReference>
<dbReference type="GO" id="GO:0005576">
    <property type="term" value="C:extracellular region"/>
    <property type="evidence" value="ECO:0007669"/>
    <property type="project" value="UniProtKB-SubCell"/>
</dbReference>
<dbReference type="GO" id="GO:0046872">
    <property type="term" value="F:metal ion binding"/>
    <property type="evidence" value="ECO:0007669"/>
    <property type="project" value="UniProtKB-KW"/>
</dbReference>
<dbReference type="GO" id="GO:0050290">
    <property type="term" value="F:sphingomyelin phosphodiesterase D activity"/>
    <property type="evidence" value="ECO:0007669"/>
    <property type="project" value="UniProtKB-EC"/>
</dbReference>
<dbReference type="GO" id="GO:0016042">
    <property type="term" value="P:lipid catabolic process"/>
    <property type="evidence" value="ECO:0007669"/>
    <property type="project" value="UniProtKB-KW"/>
</dbReference>
<dbReference type="Gene3D" id="3.20.20.190">
    <property type="entry name" value="Phosphatidylinositol (PI) phosphodiesterase"/>
    <property type="match status" value="1"/>
</dbReference>
<dbReference type="InterPro" id="IPR017946">
    <property type="entry name" value="PLC-like_Pdiesterase_TIM-brl"/>
</dbReference>
<organism>
    <name type="scientific">Arthroderma benhamiae (strain ATCC MYA-4681 / CBS 112371)</name>
    <name type="common">Trichophyton mentagrophytes</name>
    <dbReference type="NCBI Taxonomy" id="663331"/>
    <lineage>
        <taxon>Eukaryota</taxon>
        <taxon>Fungi</taxon>
        <taxon>Dikarya</taxon>
        <taxon>Ascomycota</taxon>
        <taxon>Pezizomycotina</taxon>
        <taxon>Eurotiomycetes</taxon>
        <taxon>Eurotiomycetidae</taxon>
        <taxon>Onygenales</taxon>
        <taxon>Arthrodermataceae</taxon>
        <taxon>Trichophyton</taxon>
    </lineage>
</organism>
<sequence length="339" mass="37485">MVSLLRLCSFLLAAGSILVQGSPIIAPSIPPCEPPSNFTGPSNFTSRPGNGASPFWLIAHRVLTKDGVKAALGHGANALEMDITGWWSGWFGDHDGLLTSAGDTVSDLFDEIASRRTQGDPVSFVWLDLKNPDFNKNGVNIVSLMILCREKLEKVGVRVLYGFYSSQTNGPSFKFVKQVMNENEAIGIDGKFETVEKDFEEKGIPLQKRVFSSGLFNPDFNFGNCEVHSSGVCAQLREGKESHEFSKVFGWTVSSYTRKDHVYKMMEVGVDGLIYGFVASHYYDHADIRHTLSTIRGWLEEHKDTHRLATVDDNPWSSMSKKGSSKSSWVKGEVPSIAH</sequence>
<accession>D4AZV8</accession>
<feature type="signal peptide" evidence="3">
    <location>
        <begin position="1"/>
        <end position="21"/>
    </location>
</feature>
<feature type="chain" id="PRO_0000431987" description="Sphingomyelinase D" evidence="3">
    <location>
        <begin position="22"/>
        <end position="339"/>
    </location>
</feature>
<feature type="region of interest" description="Disordered" evidence="4">
    <location>
        <begin position="313"/>
        <end position="339"/>
    </location>
</feature>
<feature type="short sequence motif" description="SMD-tail" evidence="3">
    <location>
        <begin position="309"/>
        <end position="316"/>
    </location>
</feature>
<feature type="compositionally biased region" description="Low complexity" evidence="4">
    <location>
        <begin position="317"/>
        <end position="328"/>
    </location>
</feature>
<feature type="active site" evidence="2">
    <location>
        <position position="60"/>
    </location>
</feature>
<feature type="binding site" evidence="2">
    <location>
        <position position="80"/>
    </location>
    <ligand>
        <name>Mg(2+)</name>
        <dbReference type="ChEBI" id="CHEBI:18420"/>
    </ligand>
</feature>
<feature type="binding site" evidence="2">
    <location>
        <position position="82"/>
    </location>
    <ligand>
        <name>Mg(2+)</name>
        <dbReference type="ChEBI" id="CHEBI:18420"/>
    </ligand>
</feature>
<feature type="binding site" evidence="2">
    <location>
        <position position="128"/>
    </location>
    <ligand>
        <name>Mg(2+)</name>
        <dbReference type="ChEBI" id="CHEBI:18420"/>
    </ligand>
</feature>
<protein>
    <recommendedName>
        <fullName evidence="5">Sphingomyelinase D</fullName>
        <shortName evidence="5">SMase D</shortName>
        <ecNumber evidence="1">3.1.4.41</ecNumber>
    </recommendedName>
</protein>
<gene>
    <name evidence="7" type="ORF">ARB_01728</name>
</gene>
<reference key="1">
    <citation type="journal article" date="2011" name="Genome Biol.">
        <title>Comparative and functional genomics provide insights into the pathogenicity of dermatophytic fungi.</title>
        <authorList>
            <person name="Burmester A."/>
            <person name="Shelest E."/>
            <person name="Gloeckner G."/>
            <person name="Heddergott C."/>
            <person name="Schindler S."/>
            <person name="Staib P."/>
            <person name="Heidel A."/>
            <person name="Felder M."/>
            <person name="Petzold A."/>
            <person name="Szafranski K."/>
            <person name="Feuermann M."/>
            <person name="Pedruzzi I."/>
            <person name="Priebe S."/>
            <person name="Groth M."/>
            <person name="Winkler R."/>
            <person name="Li W."/>
            <person name="Kniemeyer O."/>
            <person name="Schroeckh V."/>
            <person name="Hertweck C."/>
            <person name="Hube B."/>
            <person name="White T.C."/>
            <person name="Platzer M."/>
            <person name="Guthke R."/>
            <person name="Heitman J."/>
            <person name="Woestemeyer J."/>
            <person name="Zipfel P.F."/>
            <person name="Monod M."/>
            <person name="Brakhage A.A."/>
        </authorList>
    </citation>
    <scope>NUCLEOTIDE SEQUENCE [LARGE SCALE GENOMIC DNA]</scope>
    <source>
        <strain>ATCC MYA-4681 / CBS 112371</strain>
    </source>
</reference>
<reference key="2">
    <citation type="journal article" date="2013" name="PLoS ONE">
        <title>Identification of new sphingomyelinases D in pathogenic fungi and other pathogenic organisms.</title>
        <authorList>
            <person name="Dias-Lopes C."/>
            <person name="Neshich I.A."/>
            <person name="Neshich G."/>
            <person name="Ortega J.M."/>
            <person name="Granier C."/>
            <person name="Chavez-Olortegui C."/>
            <person name="Molina F."/>
            <person name="Felicori L."/>
        </authorList>
    </citation>
    <scope>IDENTIFICATION</scope>
</reference>
<evidence type="ECO:0000250" key="1">
    <source>
        <dbReference type="UniProtKB" id="B8NQ51"/>
    </source>
</evidence>
<evidence type="ECO:0000250" key="2">
    <source>
        <dbReference type="UniProtKB" id="Q8I914"/>
    </source>
</evidence>
<evidence type="ECO:0000255" key="3"/>
<evidence type="ECO:0000256" key="4">
    <source>
        <dbReference type="SAM" id="MobiDB-lite"/>
    </source>
</evidence>
<evidence type="ECO:0000303" key="5">
    <source>
    </source>
</evidence>
<evidence type="ECO:0000305" key="6"/>
<evidence type="ECO:0000312" key="7">
    <source>
        <dbReference type="EMBL" id="EFE31333.1"/>
    </source>
</evidence>
<comment type="function">
    <text evidence="1">Catalyzes the hydrolysis of sphingomyelin. Sphingomyelinases D are produced by some spider in their venoms, but also by arthropods such as ticks, or pathogenic bacteria and fungi. They might play a role in pathogenicity through different mechanisms, such as membrane destabilization and host cell penetration, but also pulmonary inflammation and cutaneous lesions.</text>
</comment>
<comment type="catalytic activity">
    <reaction evidence="1">
        <text>a sphingomyelin + H2O = an N-acylsphing-4-enine 1-phosphate + choline + H(+)</text>
        <dbReference type="Rhea" id="RHEA:20984"/>
        <dbReference type="ChEBI" id="CHEBI:15354"/>
        <dbReference type="ChEBI" id="CHEBI:15377"/>
        <dbReference type="ChEBI" id="CHEBI:15378"/>
        <dbReference type="ChEBI" id="CHEBI:17636"/>
        <dbReference type="ChEBI" id="CHEBI:57674"/>
        <dbReference type="EC" id="3.1.4.41"/>
    </reaction>
</comment>
<comment type="cofactor">
    <cofactor evidence="2">
        <name>Mg(2+)</name>
        <dbReference type="ChEBI" id="CHEBI:18420"/>
    </cofactor>
    <text evidence="2">Binds 1 Mg(2+) ion per subunit.</text>
</comment>
<comment type="subcellular location">
    <subcellularLocation>
        <location evidence="6">Secreted</location>
    </subcellularLocation>
</comment>
<comment type="domain">
    <text evidence="5">The SMD-tail motif is highly conserved and may be responsible for structural stabilization.</text>
</comment>
<comment type="similarity">
    <text evidence="6">Belongs to the sphingomyelinase D/phospholipase D family.</text>
</comment>
<name>SMD_ARTBC</name>
<proteinExistence type="inferred from homology"/>
<keyword id="KW-0378">Hydrolase</keyword>
<keyword id="KW-0442">Lipid degradation</keyword>
<keyword id="KW-0443">Lipid metabolism</keyword>
<keyword id="KW-0460">Magnesium</keyword>
<keyword id="KW-0479">Metal-binding</keyword>
<keyword id="KW-1185">Reference proteome</keyword>
<keyword id="KW-0964">Secreted</keyword>
<keyword id="KW-0732">Signal</keyword>
<keyword id="KW-0843">Virulence</keyword>